<evidence type="ECO:0000255" key="1">
    <source>
        <dbReference type="HAMAP-Rule" id="MF_00050"/>
    </source>
</evidence>
<reference key="1">
    <citation type="journal article" date="2002" name="Proc. Natl. Acad. Sci. U.S.A.">
        <title>Genome sequence and comparative microarray analysis of serotype M18 group A Streptococcus strains associated with acute rheumatic fever outbreaks.</title>
        <authorList>
            <person name="Smoot J.C."/>
            <person name="Barbian K.D."/>
            <person name="Van Gompel J.J."/>
            <person name="Smoot L.M."/>
            <person name="Chaussee M.S."/>
            <person name="Sylva G.L."/>
            <person name="Sturdevant D.E."/>
            <person name="Ricklefs S.M."/>
            <person name="Porcella S.F."/>
            <person name="Parkins L.D."/>
            <person name="Beres S.B."/>
            <person name="Campbell D.S."/>
            <person name="Smith T.M."/>
            <person name="Zhang Q."/>
            <person name="Kapur V."/>
            <person name="Daly J.A."/>
            <person name="Veasy L.G."/>
            <person name="Musser J.M."/>
        </authorList>
    </citation>
    <scope>NUCLEOTIDE SEQUENCE [LARGE SCALE GENOMIC DNA]</scope>
    <source>
        <strain>MGAS8232</strain>
    </source>
</reference>
<protein>
    <recommendedName>
        <fullName evidence="1">Elongation factor Ts</fullName>
        <shortName evidence="1">EF-Ts</shortName>
    </recommendedName>
</protein>
<organism>
    <name type="scientific">Streptococcus pyogenes serotype M18 (strain MGAS8232)</name>
    <dbReference type="NCBI Taxonomy" id="186103"/>
    <lineage>
        <taxon>Bacteria</taxon>
        <taxon>Bacillati</taxon>
        <taxon>Bacillota</taxon>
        <taxon>Bacilli</taxon>
        <taxon>Lactobacillales</taxon>
        <taxon>Streptococcaceae</taxon>
        <taxon>Streptococcus</taxon>
    </lineage>
</organism>
<accession>Q8NZ43</accession>
<dbReference type="EMBL" id="AE009949">
    <property type="protein sequence ID" value="AAL98600.1"/>
    <property type="molecule type" value="Genomic_DNA"/>
</dbReference>
<dbReference type="RefSeq" id="WP_011018304.1">
    <property type="nucleotide sequence ID" value="NC_003485.1"/>
</dbReference>
<dbReference type="SMR" id="Q8NZ43"/>
<dbReference type="KEGG" id="spm:spyM18_2152"/>
<dbReference type="HOGENOM" id="CLU_047155_0_1_9"/>
<dbReference type="GO" id="GO:0005737">
    <property type="term" value="C:cytoplasm"/>
    <property type="evidence" value="ECO:0007669"/>
    <property type="project" value="UniProtKB-SubCell"/>
</dbReference>
<dbReference type="GO" id="GO:0003746">
    <property type="term" value="F:translation elongation factor activity"/>
    <property type="evidence" value="ECO:0007669"/>
    <property type="project" value="UniProtKB-UniRule"/>
</dbReference>
<dbReference type="CDD" id="cd14275">
    <property type="entry name" value="UBA_EF-Ts"/>
    <property type="match status" value="1"/>
</dbReference>
<dbReference type="FunFam" id="1.10.286.20:FF:000004">
    <property type="entry name" value="Elongation factor Ts"/>
    <property type="match status" value="1"/>
</dbReference>
<dbReference type="FunFam" id="1.10.8.10:FF:000001">
    <property type="entry name" value="Elongation factor Ts"/>
    <property type="match status" value="1"/>
</dbReference>
<dbReference type="FunFam" id="3.30.479.20:FF:000013">
    <property type="entry name" value="Elongation factor Ts"/>
    <property type="match status" value="1"/>
</dbReference>
<dbReference type="Gene3D" id="1.10.286.20">
    <property type="match status" value="1"/>
</dbReference>
<dbReference type="Gene3D" id="1.10.8.10">
    <property type="entry name" value="DNA helicase RuvA subunit, C-terminal domain"/>
    <property type="match status" value="1"/>
</dbReference>
<dbReference type="Gene3D" id="3.30.479.20">
    <property type="entry name" value="Elongation factor Ts, dimerisation domain"/>
    <property type="match status" value="2"/>
</dbReference>
<dbReference type="HAMAP" id="MF_00050">
    <property type="entry name" value="EF_Ts"/>
    <property type="match status" value="1"/>
</dbReference>
<dbReference type="InterPro" id="IPR036402">
    <property type="entry name" value="EF-Ts_dimer_sf"/>
</dbReference>
<dbReference type="InterPro" id="IPR001816">
    <property type="entry name" value="Transl_elong_EFTs/EF1B"/>
</dbReference>
<dbReference type="InterPro" id="IPR014039">
    <property type="entry name" value="Transl_elong_EFTs/EF1B_dimer"/>
</dbReference>
<dbReference type="InterPro" id="IPR018101">
    <property type="entry name" value="Transl_elong_Ts_CS"/>
</dbReference>
<dbReference type="InterPro" id="IPR009060">
    <property type="entry name" value="UBA-like_sf"/>
</dbReference>
<dbReference type="NCBIfam" id="TIGR00116">
    <property type="entry name" value="tsf"/>
    <property type="match status" value="1"/>
</dbReference>
<dbReference type="PANTHER" id="PTHR11741">
    <property type="entry name" value="ELONGATION FACTOR TS"/>
    <property type="match status" value="1"/>
</dbReference>
<dbReference type="PANTHER" id="PTHR11741:SF0">
    <property type="entry name" value="ELONGATION FACTOR TS, MITOCHONDRIAL"/>
    <property type="match status" value="1"/>
</dbReference>
<dbReference type="Pfam" id="PF00889">
    <property type="entry name" value="EF_TS"/>
    <property type="match status" value="1"/>
</dbReference>
<dbReference type="SUPFAM" id="SSF54713">
    <property type="entry name" value="Elongation factor Ts (EF-Ts), dimerisation domain"/>
    <property type="match status" value="1"/>
</dbReference>
<dbReference type="SUPFAM" id="SSF46934">
    <property type="entry name" value="UBA-like"/>
    <property type="match status" value="1"/>
</dbReference>
<dbReference type="PROSITE" id="PS01126">
    <property type="entry name" value="EF_TS_1"/>
    <property type="match status" value="1"/>
</dbReference>
<dbReference type="PROSITE" id="PS01127">
    <property type="entry name" value="EF_TS_2"/>
    <property type="match status" value="1"/>
</dbReference>
<gene>
    <name evidence="1" type="primary">tsf</name>
    <name type="ordered locus">spyM18_2152</name>
</gene>
<name>EFTS_STRP8</name>
<feature type="chain" id="PRO_0000161213" description="Elongation factor Ts">
    <location>
        <begin position="1"/>
        <end position="346"/>
    </location>
</feature>
<feature type="region of interest" description="Involved in Mg(2+) ion dislocation from EF-Tu" evidence="1">
    <location>
        <begin position="80"/>
        <end position="83"/>
    </location>
</feature>
<proteinExistence type="inferred from homology"/>
<sequence>MAEITAKLVKELREKSGAGVMDAKKALVETDGDMDKAVELLREKGMAKAAKKADRVAAEGLTGVYVHGNVAAVVEVNAETDFVAKNAQFVELVNATAKVIAEGKPANNDEALALVMPSGETLAEAYVNATATIGEKISFRRFALIEKTDEQHLGAYQHNGGRIGVISVVEGGDDALAKQVSMHIAAMKPTVLSYTELDAQFIKDELAQLNHAIELDNESRAMVDKPALPFLKYGSKAQLSDDVITAAEADIKAELAAEGKPEKIWDKIIPGKMDRFMLDNTKVDQAYTLLAQVYIMDDSKTVEAYLDSVNAKAIAFARFEVGEGIEKKANDFESEVAATMAAALNN</sequence>
<comment type="function">
    <text evidence="1">Associates with the EF-Tu.GDP complex and induces the exchange of GDP to GTP. It remains bound to the aminoacyl-tRNA.EF-Tu.GTP complex up to the GTP hydrolysis stage on the ribosome.</text>
</comment>
<comment type="subcellular location">
    <subcellularLocation>
        <location evidence="1">Cytoplasm</location>
    </subcellularLocation>
</comment>
<comment type="similarity">
    <text evidence="1">Belongs to the EF-Ts family.</text>
</comment>
<keyword id="KW-0963">Cytoplasm</keyword>
<keyword id="KW-0251">Elongation factor</keyword>
<keyword id="KW-0648">Protein biosynthesis</keyword>